<name>MUPP_PSEPK</name>
<evidence type="ECO:0000250" key="1">
    <source>
        <dbReference type="UniProtKB" id="P95649"/>
    </source>
</evidence>
<evidence type="ECO:0000269" key="2">
    <source>
    </source>
</evidence>
<evidence type="ECO:0000303" key="3">
    <source>
    </source>
</evidence>
<evidence type="ECO:0000305" key="4"/>
<evidence type="ECO:0000312" key="5">
    <source>
        <dbReference type="EMBL" id="AAN67384.1"/>
    </source>
</evidence>
<gene>
    <name evidence="3" type="primary">mupP</name>
    <name evidence="5" type="synonym">gph</name>
    <name evidence="5" type="ordered locus">PP_1764</name>
</gene>
<organism>
    <name type="scientific">Pseudomonas putida (strain ATCC 47054 / DSM 6125 / CFBP 8728 / NCIMB 11950 / KT2440)</name>
    <dbReference type="NCBI Taxonomy" id="160488"/>
    <lineage>
        <taxon>Bacteria</taxon>
        <taxon>Pseudomonadati</taxon>
        <taxon>Pseudomonadota</taxon>
        <taxon>Gammaproteobacteria</taxon>
        <taxon>Pseudomonadales</taxon>
        <taxon>Pseudomonadaceae</taxon>
        <taxon>Pseudomonas</taxon>
    </lineage>
</organism>
<keyword id="KW-0046">Antibiotic resistance</keyword>
<keyword id="KW-0119">Carbohydrate metabolism</keyword>
<keyword id="KW-0133">Cell shape</keyword>
<keyword id="KW-0961">Cell wall biogenesis/degradation</keyword>
<keyword id="KW-0378">Hydrolase</keyword>
<keyword id="KW-0460">Magnesium</keyword>
<keyword id="KW-0479">Metal-binding</keyword>
<keyword id="KW-0573">Peptidoglycan synthesis</keyword>
<keyword id="KW-1185">Reference proteome</keyword>
<comment type="function">
    <text evidence="2">Specifically catalyzes the dephosphorylation of N-acetylmuramate 6-phosphate (MurNAc-6P) to MurNac. Is involved in peptidoglycan recycling as part of a cell wall recycling pathway that bypasses de novo biosynthesis of the peptidoglycan precursor UDP-MurNAc. Plays a role in intrinsic resistance to fosfomycin, which targets the de novo synthesis of UDP-MurNAc. Shows a very low activity on GlcNAc-6P, and neither alpha-1-phosphorylated MurNAc, GlcNAc, or glucose nor glucosamine-6P or glucose-6P can be used as a substrate.</text>
</comment>
<comment type="catalytic activity">
    <reaction evidence="2">
        <text>N-acetyl-D-muramate 6-phosphate + H2O = N-acetyl-D-muramate + phosphate</text>
        <dbReference type="Rhea" id="RHEA:53728"/>
        <dbReference type="ChEBI" id="CHEBI:15377"/>
        <dbReference type="ChEBI" id="CHEBI:28881"/>
        <dbReference type="ChEBI" id="CHEBI:43474"/>
        <dbReference type="ChEBI" id="CHEBI:58722"/>
        <dbReference type="EC" id="3.1.3.105"/>
    </reaction>
</comment>
<comment type="cofactor">
    <cofactor evidence="2">
        <name>Mg(2+)</name>
        <dbReference type="ChEBI" id="CHEBI:18420"/>
    </cofactor>
</comment>
<comment type="biophysicochemical properties">
    <kinetics>
        <KM evidence="2">310 uM for N-acetylmuramate 6-phosphate (at pH 7.6 and 22 degrees Celsius)</KM>
        <Vmax evidence="2">2.04 umol/min/mg enzyme (at pH 7.6 and 22 degrees Celsius)</Vmax>
        <text evidence="2">kcat is 0.88 sec(-1) (at pH 7.6 and 22 degrees Celsius).</text>
    </kinetics>
    <phDependence>
        <text evidence="2">Optimum pH is 6-9. At pH 4 and pH 10, its activity is only 40 and 60%, respectively, of the maximum.</text>
    </phDependence>
    <temperatureDependence>
        <text evidence="2">Optimum temperature is 45 degrees Celsius. However, at that temperature, MupP is completely inactivated within 40 minutes. Loses about 10% of its activity at 22 degrees Celsius and 70% at 37 degrees Celsius within 40 minutes.</text>
    </temperatureDependence>
</comment>
<comment type="pathway">
    <text evidence="2">Cell wall biogenesis; peptidoglycan recycling.</text>
</comment>
<comment type="disruption phenotype">
    <text evidence="2">Cells lacking this gene are highly susceptible to fosfomycin, accumulate large amounts of MurNAc 6-phosphate, and show lower levels of UDP-MurNAc and UDP-GlcNAc than wild-type cells.</text>
</comment>
<comment type="similarity">
    <text evidence="4">Belongs to the HAD-like hydrolase superfamily. CbbY/CbbZ/Gph/YieH family. Phosphatase MupP subfamily.</text>
</comment>
<proteinExistence type="evidence at protein level"/>
<dbReference type="EC" id="3.1.3.105" evidence="2"/>
<dbReference type="EMBL" id="AE015451">
    <property type="protein sequence ID" value="AAN67384.1"/>
    <property type="molecule type" value="Genomic_DNA"/>
</dbReference>
<dbReference type="RefSeq" id="NP_743920.1">
    <property type="nucleotide sequence ID" value="NC_002947.4"/>
</dbReference>
<dbReference type="RefSeq" id="WP_010952803.1">
    <property type="nucleotide sequence ID" value="NZ_CP169744.1"/>
</dbReference>
<dbReference type="SMR" id="Q88M11"/>
<dbReference type="STRING" id="160488.PP_1764"/>
<dbReference type="PaxDb" id="160488-PP_1764"/>
<dbReference type="GeneID" id="83681702"/>
<dbReference type="KEGG" id="ppu:PP_1764"/>
<dbReference type="PATRIC" id="fig|160488.4.peg.1859"/>
<dbReference type="eggNOG" id="COG0546">
    <property type="taxonomic scope" value="Bacteria"/>
</dbReference>
<dbReference type="HOGENOM" id="CLU_045011_19_1_6"/>
<dbReference type="OrthoDB" id="9776368at2"/>
<dbReference type="PhylomeDB" id="Q88M11"/>
<dbReference type="BioCyc" id="MetaCyc:G1G01-1865-MONOMER"/>
<dbReference type="BioCyc" id="PPUT160488:G1G01-1865-MONOMER"/>
<dbReference type="BRENDA" id="3.1.3.105">
    <property type="organism ID" value="5092"/>
</dbReference>
<dbReference type="SABIO-RK" id="Q88M11"/>
<dbReference type="UniPathway" id="UPA00544"/>
<dbReference type="Proteomes" id="UP000000556">
    <property type="component" value="Chromosome"/>
</dbReference>
<dbReference type="GO" id="GO:0005829">
    <property type="term" value="C:cytosol"/>
    <property type="evidence" value="ECO:0007669"/>
    <property type="project" value="TreeGrafter"/>
</dbReference>
<dbReference type="GO" id="GO:0046872">
    <property type="term" value="F:metal ion binding"/>
    <property type="evidence" value="ECO:0007669"/>
    <property type="project" value="UniProtKB-KW"/>
</dbReference>
<dbReference type="GO" id="GO:0016791">
    <property type="term" value="F:phosphatase activity"/>
    <property type="evidence" value="ECO:0000314"/>
    <property type="project" value="UniProtKB"/>
</dbReference>
<dbReference type="GO" id="GO:0008967">
    <property type="term" value="F:phosphoglycolate phosphatase activity"/>
    <property type="evidence" value="ECO:0007669"/>
    <property type="project" value="TreeGrafter"/>
</dbReference>
<dbReference type="GO" id="GO:0071555">
    <property type="term" value="P:cell wall organization"/>
    <property type="evidence" value="ECO:0007669"/>
    <property type="project" value="UniProtKB-KW"/>
</dbReference>
<dbReference type="GO" id="GO:0006281">
    <property type="term" value="P:DNA repair"/>
    <property type="evidence" value="ECO:0007669"/>
    <property type="project" value="TreeGrafter"/>
</dbReference>
<dbReference type="GO" id="GO:0097172">
    <property type="term" value="P:N-acetylmuramic acid metabolic process"/>
    <property type="evidence" value="ECO:0000314"/>
    <property type="project" value="UniProtKB"/>
</dbReference>
<dbReference type="GO" id="GO:0009252">
    <property type="term" value="P:peptidoglycan biosynthetic process"/>
    <property type="evidence" value="ECO:0007669"/>
    <property type="project" value="UniProtKB-KW"/>
</dbReference>
<dbReference type="GO" id="GO:0009254">
    <property type="term" value="P:peptidoglycan turnover"/>
    <property type="evidence" value="ECO:0000315"/>
    <property type="project" value="UniProtKB"/>
</dbReference>
<dbReference type="GO" id="GO:0008360">
    <property type="term" value="P:regulation of cell shape"/>
    <property type="evidence" value="ECO:0007669"/>
    <property type="project" value="UniProtKB-KW"/>
</dbReference>
<dbReference type="GO" id="GO:0046677">
    <property type="term" value="P:response to antibiotic"/>
    <property type="evidence" value="ECO:0007669"/>
    <property type="project" value="UniProtKB-KW"/>
</dbReference>
<dbReference type="FunFam" id="1.10.150.240:FF:000020">
    <property type="entry name" value="N-acetylmuramic acid 6-phosphate phosphatase"/>
    <property type="match status" value="1"/>
</dbReference>
<dbReference type="FunFam" id="3.40.50.1000:FF:000022">
    <property type="entry name" value="Phosphoglycolate phosphatase"/>
    <property type="match status" value="1"/>
</dbReference>
<dbReference type="Gene3D" id="3.40.50.1000">
    <property type="entry name" value="HAD superfamily/HAD-like"/>
    <property type="match status" value="1"/>
</dbReference>
<dbReference type="Gene3D" id="1.10.150.240">
    <property type="entry name" value="Putative phosphatase, domain 2"/>
    <property type="match status" value="1"/>
</dbReference>
<dbReference type="InterPro" id="IPR050155">
    <property type="entry name" value="HAD-like_hydrolase_sf"/>
</dbReference>
<dbReference type="InterPro" id="IPR036412">
    <property type="entry name" value="HAD-like_sf"/>
</dbReference>
<dbReference type="InterPro" id="IPR006439">
    <property type="entry name" value="HAD-SF_hydro_IA"/>
</dbReference>
<dbReference type="InterPro" id="IPR041492">
    <property type="entry name" value="HAD_2"/>
</dbReference>
<dbReference type="InterPro" id="IPR023214">
    <property type="entry name" value="HAD_sf"/>
</dbReference>
<dbReference type="InterPro" id="IPR023198">
    <property type="entry name" value="PGP-like_dom2"/>
</dbReference>
<dbReference type="NCBIfam" id="TIGR01549">
    <property type="entry name" value="HAD-SF-IA-v1"/>
    <property type="match status" value="1"/>
</dbReference>
<dbReference type="NCBIfam" id="TIGR01509">
    <property type="entry name" value="HAD-SF-IA-v3"/>
    <property type="match status" value="1"/>
</dbReference>
<dbReference type="NCBIfam" id="NF009696">
    <property type="entry name" value="PRK13222.1-3"/>
    <property type="match status" value="1"/>
</dbReference>
<dbReference type="PANTHER" id="PTHR43434">
    <property type="entry name" value="PHOSPHOGLYCOLATE PHOSPHATASE"/>
    <property type="match status" value="1"/>
</dbReference>
<dbReference type="PANTHER" id="PTHR43434:SF23">
    <property type="entry name" value="PHOSPHOGLYCOLATE PHOSPHATASE"/>
    <property type="match status" value="1"/>
</dbReference>
<dbReference type="Pfam" id="PF13419">
    <property type="entry name" value="HAD_2"/>
    <property type="match status" value="1"/>
</dbReference>
<dbReference type="PRINTS" id="PR00413">
    <property type="entry name" value="HADHALOGNASE"/>
</dbReference>
<dbReference type="SFLD" id="SFLDG01135">
    <property type="entry name" value="C1.5.6:_HAD__Beta-PGM__Phospha"/>
    <property type="match status" value="1"/>
</dbReference>
<dbReference type="SFLD" id="SFLDG01129">
    <property type="entry name" value="C1.5:_HAD__Beta-PGM__Phosphata"/>
    <property type="match status" value="1"/>
</dbReference>
<dbReference type="SUPFAM" id="SSF56784">
    <property type="entry name" value="HAD-like"/>
    <property type="match status" value="1"/>
</dbReference>
<protein>
    <recommendedName>
        <fullName evidence="3">N-acetylmuramic acid 6-phosphate phosphatase</fullName>
        <shortName evidence="3">MurNAc 6-phosphate phosphatase</shortName>
        <shortName evidence="3">MurNAc-6P phosphatase</shortName>
        <ecNumber evidence="2">3.1.3.105</ecNumber>
    </recommendedName>
</protein>
<sequence length="223" mass="24373">MRLRAVLFDMDGTLLDTAPDFIAICQAMLAERGLPAVDDNLIRGVISGGARAMVATAFAMDPEADGFEALRLEFLERYQRDCAVHSKLFEGMAELLADIEKGNLLWGVVTNKPVRFAEPIMQQLGLAERSALLICPDHVKNSKPDPEPLILACKTLNLDPASVLFVGDDLRDIESGRDAGTRTAAVRYGYIHPEDNPNNWGADVVVDHPLELRKVIDSALCGC</sequence>
<accession>Q88M11</accession>
<reference key="1">
    <citation type="journal article" date="2002" name="Environ. Microbiol.">
        <title>Complete genome sequence and comparative analysis of the metabolically versatile Pseudomonas putida KT2440.</title>
        <authorList>
            <person name="Nelson K.E."/>
            <person name="Weinel C."/>
            <person name="Paulsen I.T."/>
            <person name="Dodson R.J."/>
            <person name="Hilbert H."/>
            <person name="Martins dos Santos V.A.P."/>
            <person name="Fouts D.E."/>
            <person name="Gill S.R."/>
            <person name="Pop M."/>
            <person name="Holmes M."/>
            <person name="Brinkac L.M."/>
            <person name="Beanan M.J."/>
            <person name="DeBoy R.T."/>
            <person name="Daugherty S.C."/>
            <person name="Kolonay J.F."/>
            <person name="Madupu R."/>
            <person name="Nelson W.C."/>
            <person name="White O."/>
            <person name="Peterson J.D."/>
            <person name="Khouri H.M."/>
            <person name="Hance I."/>
            <person name="Chris Lee P."/>
            <person name="Holtzapple E.K."/>
            <person name="Scanlan D."/>
            <person name="Tran K."/>
            <person name="Moazzez A."/>
            <person name="Utterback T.R."/>
            <person name="Rizzo M."/>
            <person name="Lee K."/>
            <person name="Kosack D."/>
            <person name="Moestl D."/>
            <person name="Wedler H."/>
            <person name="Lauber J."/>
            <person name="Stjepandic D."/>
            <person name="Hoheisel J."/>
            <person name="Straetz M."/>
            <person name="Heim S."/>
            <person name="Kiewitz C."/>
            <person name="Eisen J.A."/>
            <person name="Timmis K.N."/>
            <person name="Duesterhoeft A."/>
            <person name="Tuemmler B."/>
            <person name="Fraser C.M."/>
        </authorList>
    </citation>
    <scope>NUCLEOTIDE SEQUENCE [LARGE SCALE GENOMIC DNA]</scope>
    <source>
        <strain>ATCC 47054 / DSM 6125 / CFBP 8728 / NCIMB 11950 / KT2440</strain>
    </source>
</reference>
<reference key="2">
    <citation type="journal article" date="2017" name="MBio">
        <title>The N-Acetylmuramic acid 6-phosphate phosphatase MupP completes the Pseudomonas peptidoglycan recycling pathway leading to intrinsic fosfomycin resistance.</title>
        <authorList>
            <person name="Borisova M."/>
            <person name="Gisin J."/>
            <person name="Mayer C."/>
        </authorList>
    </citation>
    <scope>IDENTIFICATION</scope>
    <scope>FUNCTION</scope>
    <scope>CATALYTIC ACTIVITY</scope>
    <scope>COFACTOR</scope>
    <scope>SUBSTRATE SPECIFICITY</scope>
    <scope>BIOPHYSICOCHEMICAL PROPERTIES</scope>
    <scope>DISRUPTION PHENOTYPE</scope>
    <scope>PATHWAY</scope>
    <source>
        <strain>ATCC 47054 / DSM 6125 / CFBP 8728 / NCIMB 11950 / KT2440</strain>
    </source>
</reference>
<feature type="chain" id="PRO_0000441264" description="N-acetylmuramic acid 6-phosphate phosphatase">
    <location>
        <begin position="1"/>
        <end position="223"/>
    </location>
</feature>
<feature type="active site" description="Nucleophile" evidence="1">
    <location>
        <position position="9"/>
    </location>
</feature>
<feature type="active site" description="Proton donor" evidence="1">
    <location>
        <position position="11"/>
    </location>
</feature>
<feature type="binding site" evidence="1">
    <location>
        <position position="9"/>
    </location>
    <ligand>
        <name>Mg(2+)</name>
        <dbReference type="ChEBI" id="CHEBI:18420"/>
    </ligand>
</feature>
<feature type="binding site" evidence="1">
    <location>
        <position position="11"/>
    </location>
    <ligand>
        <name>Mg(2+)</name>
        <dbReference type="ChEBI" id="CHEBI:18420"/>
    </ligand>
</feature>
<feature type="binding site" evidence="1">
    <location>
        <position position="168"/>
    </location>
    <ligand>
        <name>Mg(2+)</name>
        <dbReference type="ChEBI" id="CHEBI:18420"/>
    </ligand>
</feature>